<reference key="1">
    <citation type="journal article" date="1990" name="Mol. Gen. Genet.">
        <title>Cloning and sequencing of the hemA gene of Rhodobacter capsulatus and isolation of a delta-aminolevulinic acid-dependent mutant strain.</title>
        <authorList>
            <person name="Hornberger U."/>
            <person name="Liebetanz R."/>
            <person name="Tichy H.V."/>
            <person name="Drews G."/>
        </authorList>
    </citation>
    <scope>NUCLEOTIDE SEQUENCE [GENOMIC DNA]</scope>
    <source>
        <strain>ATCC BAA-309 / NBRC 16581 / SB1003</strain>
    </source>
</reference>
<reference key="2">
    <citation type="journal article" date="1991" name="FEMS Microbiol. Lett.">
        <title>Use of a lacZ fusion to study transcriptional regulation of the Rhodobacter capsulatus hemA gene.</title>
        <authorList>
            <person name="Wright M.S."/>
            <person name="Eckert J.J."/>
            <person name="Biel S.W."/>
            <person name="Biel A.J."/>
        </authorList>
    </citation>
    <scope>NUCLEOTIDE SEQUENCE [GENOMIC DNA]</scope>
    <source>
        <strain>ATCC BAA-309 / NBRC 16581 / SB1003</strain>
    </source>
</reference>
<reference key="3">
    <citation type="journal article" date="2010" name="J. Bacteriol.">
        <title>Complete genome sequence of the photosynthetic purple nonsulfur bacterium Rhodobacter capsulatus SB 1003.</title>
        <authorList>
            <person name="Strnad H."/>
            <person name="Lapidus A."/>
            <person name="Paces J."/>
            <person name="Ulbrich P."/>
            <person name="Vlcek C."/>
            <person name="Paces V."/>
            <person name="Haselkorn R."/>
        </authorList>
    </citation>
    <scope>NUCLEOTIDE SEQUENCE [LARGE SCALE GENOMIC DNA]</scope>
    <source>
        <strain>ATCC BAA-309 / NBRC 16581 / SB1003</strain>
    </source>
</reference>
<reference key="4">
    <citation type="journal article" date="2005" name="EMBO J.">
        <title>Crystal structure of 5-aminolevulinate synthase, the first enzyme of heme biosynthesis, and its link to XLSA in humans.</title>
        <authorList>
            <person name="Astner I."/>
            <person name="Schulze J.O."/>
            <person name="van den Heuvel J."/>
            <person name="Jahn D."/>
            <person name="Schubert W.D."/>
            <person name="Heinz D.W."/>
        </authorList>
    </citation>
    <scope>X-RAY CRYSTALLOGRAPHY (2.1 ANGSTROMS) OF 1-401</scope>
    <scope>SUBUNIT</scope>
    <scope>COFACTOR-BINDING SITES</scope>
    <scope>SUBSTRATE-BINDING SITES</scope>
    <scope>ACTIVE SITE</scope>
</reference>
<dbReference type="EC" id="2.3.1.37"/>
<dbReference type="EMBL" id="X53309">
    <property type="protein sequence ID" value="CAA37393.1"/>
    <property type="molecule type" value="Genomic_DNA"/>
</dbReference>
<dbReference type="EMBL" id="X53864">
    <property type="protein sequence ID" value="CAA37857.1"/>
    <property type="molecule type" value="Genomic_DNA"/>
</dbReference>
<dbReference type="EMBL" id="CP001312">
    <property type="protein sequence ID" value="ADE85192.1"/>
    <property type="molecule type" value="Genomic_DNA"/>
</dbReference>
<dbReference type="PIR" id="S10528">
    <property type="entry name" value="S10528"/>
</dbReference>
<dbReference type="RefSeq" id="WP_013067171.1">
    <property type="nucleotide sequence ID" value="NC_014034.1"/>
</dbReference>
<dbReference type="PDB" id="2BWN">
    <property type="method" value="X-ray"/>
    <property type="resolution" value="2.10 A"/>
    <property type="chains" value="A/B/D/E=1-401"/>
</dbReference>
<dbReference type="PDB" id="2BWO">
    <property type="method" value="X-ray"/>
    <property type="resolution" value="2.80 A"/>
    <property type="chains" value="A/B/D/E=1-401"/>
</dbReference>
<dbReference type="PDB" id="2BWP">
    <property type="method" value="X-ray"/>
    <property type="resolution" value="2.70 A"/>
    <property type="chains" value="A/B/D/E=1-401"/>
</dbReference>
<dbReference type="PDBsum" id="2BWN"/>
<dbReference type="PDBsum" id="2BWO"/>
<dbReference type="PDBsum" id="2BWP"/>
<dbReference type="SMR" id="P18079"/>
<dbReference type="STRING" id="272942.RCAP_rcc01447"/>
<dbReference type="GeneID" id="31490330"/>
<dbReference type="KEGG" id="rcp:RCAP_rcc01447"/>
<dbReference type="eggNOG" id="COG0156">
    <property type="taxonomic scope" value="Bacteria"/>
</dbReference>
<dbReference type="HOGENOM" id="CLU_015846_11_1_5"/>
<dbReference type="OrthoDB" id="9807157at2"/>
<dbReference type="BRENDA" id="2.3.1.37">
    <property type="organism ID" value="5381"/>
</dbReference>
<dbReference type="UniPathway" id="UPA00251">
    <property type="reaction ID" value="UER00375"/>
</dbReference>
<dbReference type="EvolutionaryTrace" id="P18079"/>
<dbReference type="Proteomes" id="UP000002361">
    <property type="component" value="Chromosome"/>
</dbReference>
<dbReference type="GO" id="GO:0003870">
    <property type="term" value="F:5-aminolevulinate synthase activity"/>
    <property type="evidence" value="ECO:0007669"/>
    <property type="project" value="UniProtKB-EC"/>
</dbReference>
<dbReference type="GO" id="GO:0030170">
    <property type="term" value="F:pyridoxal phosphate binding"/>
    <property type="evidence" value="ECO:0007669"/>
    <property type="project" value="InterPro"/>
</dbReference>
<dbReference type="GO" id="GO:0006782">
    <property type="term" value="P:protoporphyrinogen IX biosynthetic process"/>
    <property type="evidence" value="ECO:0007669"/>
    <property type="project" value="UniProtKB-UniPathway"/>
</dbReference>
<dbReference type="CDD" id="cd06454">
    <property type="entry name" value="KBL_like"/>
    <property type="match status" value="1"/>
</dbReference>
<dbReference type="FunFam" id="3.40.640.10:FF:000006">
    <property type="entry name" value="5-aminolevulinate synthase, mitochondrial"/>
    <property type="match status" value="1"/>
</dbReference>
<dbReference type="Gene3D" id="3.90.1150.10">
    <property type="entry name" value="Aspartate Aminotransferase, domain 1"/>
    <property type="match status" value="1"/>
</dbReference>
<dbReference type="Gene3D" id="3.40.640.10">
    <property type="entry name" value="Type I PLP-dependent aspartate aminotransferase-like (Major domain)"/>
    <property type="match status" value="1"/>
</dbReference>
<dbReference type="InterPro" id="IPR010961">
    <property type="entry name" value="4pyrrol_synth_NH2levulA_synth"/>
</dbReference>
<dbReference type="InterPro" id="IPR001917">
    <property type="entry name" value="Aminotrans_II_pyridoxalP_BS"/>
</dbReference>
<dbReference type="InterPro" id="IPR004839">
    <property type="entry name" value="Aminotransferase_I/II_large"/>
</dbReference>
<dbReference type="InterPro" id="IPR050087">
    <property type="entry name" value="AON_synthase_class-II"/>
</dbReference>
<dbReference type="InterPro" id="IPR015424">
    <property type="entry name" value="PyrdxlP-dep_Trfase"/>
</dbReference>
<dbReference type="InterPro" id="IPR015421">
    <property type="entry name" value="PyrdxlP-dep_Trfase_major"/>
</dbReference>
<dbReference type="InterPro" id="IPR015422">
    <property type="entry name" value="PyrdxlP-dep_Trfase_small"/>
</dbReference>
<dbReference type="NCBIfam" id="TIGR01821">
    <property type="entry name" value="5aminolev_synth"/>
    <property type="match status" value="1"/>
</dbReference>
<dbReference type="PANTHER" id="PTHR13693:SF102">
    <property type="entry name" value="2-AMINO-3-KETOBUTYRATE COENZYME A LIGASE, MITOCHONDRIAL"/>
    <property type="match status" value="1"/>
</dbReference>
<dbReference type="PANTHER" id="PTHR13693">
    <property type="entry name" value="CLASS II AMINOTRANSFERASE/8-AMINO-7-OXONONANOATE SYNTHASE"/>
    <property type="match status" value="1"/>
</dbReference>
<dbReference type="Pfam" id="PF00155">
    <property type="entry name" value="Aminotran_1_2"/>
    <property type="match status" value="1"/>
</dbReference>
<dbReference type="SUPFAM" id="SSF53383">
    <property type="entry name" value="PLP-dependent transferases"/>
    <property type="match status" value="1"/>
</dbReference>
<dbReference type="PROSITE" id="PS00599">
    <property type="entry name" value="AA_TRANSFER_CLASS_2"/>
    <property type="match status" value="1"/>
</dbReference>
<organism>
    <name type="scientific">Rhodobacter capsulatus (strain ATCC BAA-309 / NBRC 16581 / SB1003)</name>
    <dbReference type="NCBI Taxonomy" id="272942"/>
    <lineage>
        <taxon>Bacteria</taxon>
        <taxon>Pseudomonadati</taxon>
        <taxon>Pseudomonadota</taxon>
        <taxon>Alphaproteobacteria</taxon>
        <taxon>Rhodobacterales</taxon>
        <taxon>Rhodobacter group</taxon>
        <taxon>Rhodobacter</taxon>
    </lineage>
</organism>
<feature type="chain" id="PRO_0000163828" description="5-aminolevulinate synthase">
    <location>
        <begin position="1"/>
        <end position="409"/>
    </location>
</feature>
<feature type="active site" evidence="1">
    <location>
        <position position="248"/>
    </location>
</feature>
<feature type="binding site" evidence="1">
    <location>
        <position position="21"/>
    </location>
    <ligand>
        <name>succinyl-CoA</name>
        <dbReference type="ChEBI" id="CHEBI:57292"/>
    </ligand>
</feature>
<feature type="binding site" evidence="1">
    <location>
        <position position="137"/>
    </location>
    <ligand>
        <name>succinyl-CoA</name>
        <dbReference type="ChEBI" id="CHEBI:57292"/>
    </ligand>
</feature>
<feature type="binding site" evidence="1">
    <location>
        <position position="156"/>
    </location>
    <ligand>
        <name>succinyl-CoA</name>
        <dbReference type="ChEBI" id="CHEBI:57292"/>
    </ligand>
</feature>
<feature type="binding site" description="in other chain" evidence="1">
    <location>
        <position position="189"/>
    </location>
    <ligand>
        <name>pyridoxal 5'-phosphate</name>
        <dbReference type="ChEBI" id="CHEBI:597326"/>
        <note>ligand shared between dimeric partners</note>
    </ligand>
</feature>
<feature type="binding site" description="in other chain" evidence="1">
    <location>
        <position position="217"/>
    </location>
    <ligand>
        <name>pyridoxal 5'-phosphate</name>
        <dbReference type="ChEBI" id="CHEBI:597326"/>
        <note>ligand shared between dimeric partners</note>
    </ligand>
</feature>
<feature type="binding site" description="in other chain" evidence="1">
    <location>
        <position position="245"/>
    </location>
    <ligand>
        <name>pyridoxal 5'-phosphate</name>
        <dbReference type="ChEBI" id="CHEBI:597326"/>
        <note>ligand shared between dimeric partners</note>
    </ligand>
</feature>
<feature type="binding site" evidence="1">
    <location>
        <position position="277"/>
    </location>
    <ligand>
        <name>pyridoxal 5'-phosphate</name>
        <dbReference type="ChEBI" id="CHEBI:597326"/>
        <note>ligand shared between dimeric partners</note>
    </ligand>
</feature>
<feature type="binding site" evidence="1">
    <location>
        <position position="278"/>
    </location>
    <ligand>
        <name>pyridoxal 5'-phosphate</name>
        <dbReference type="ChEBI" id="CHEBI:597326"/>
        <note>ligand shared between dimeric partners</note>
    </ligand>
</feature>
<feature type="binding site" evidence="1">
    <location>
        <position position="365"/>
    </location>
    <ligand>
        <name>succinyl-CoA</name>
        <dbReference type="ChEBI" id="CHEBI:57292"/>
    </ligand>
</feature>
<feature type="modified residue" description="N6-(pyridoxal phosphate)lysine" evidence="2">
    <location>
        <position position="248"/>
    </location>
</feature>
<feature type="sequence conflict" description="In Ref. 1; CAA37857 and 2; CAA37393." evidence="2" ref="1 2">
    <original>V</original>
    <variation>L</variation>
    <location>
        <position position="128"/>
    </location>
</feature>
<feature type="sequence conflict" description="In Ref. 1; CAA37857 and 2; CAA37393." evidence="2" ref="1 2">
    <location>
        <begin position="402"/>
        <end position="409"/>
    </location>
</feature>
<feature type="helix" evidence="3">
    <location>
        <begin position="3"/>
        <end position="16"/>
    </location>
</feature>
<feature type="strand" evidence="3">
    <location>
        <begin position="25"/>
        <end position="28"/>
    </location>
</feature>
<feature type="strand" evidence="3">
    <location>
        <begin position="35"/>
        <end position="39"/>
    </location>
</feature>
<feature type="strand" evidence="3">
    <location>
        <begin position="45"/>
        <end position="50"/>
    </location>
</feature>
<feature type="helix" evidence="3">
    <location>
        <begin position="59"/>
        <end position="61"/>
    </location>
</feature>
<feature type="helix" evidence="3">
    <location>
        <begin position="63"/>
        <end position="76"/>
    </location>
</feature>
<feature type="turn" evidence="3">
    <location>
        <begin position="84"/>
        <end position="86"/>
    </location>
</feature>
<feature type="helix" evidence="3">
    <location>
        <begin position="91"/>
        <end position="103"/>
    </location>
</feature>
<feature type="strand" evidence="3">
    <location>
        <begin position="107"/>
        <end position="113"/>
    </location>
</feature>
<feature type="helix" evidence="3">
    <location>
        <begin position="115"/>
        <end position="129"/>
    </location>
</feature>
<feature type="strand" evidence="3">
    <location>
        <begin position="134"/>
        <end position="138"/>
    </location>
</feature>
<feature type="helix" evidence="3">
    <location>
        <begin position="143"/>
        <end position="151"/>
    </location>
</feature>
<feature type="strand" evidence="3">
    <location>
        <begin position="156"/>
        <end position="159"/>
    </location>
</feature>
<feature type="helix" evidence="3">
    <location>
        <begin position="164"/>
        <end position="173"/>
    </location>
</feature>
<feature type="strand" evidence="3">
    <location>
        <begin position="180"/>
        <end position="187"/>
    </location>
</feature>
<feature type="turn" evidence="3">
    <location>
        <begin position="189"/>
        <end position="191"/>
    </location>
</feature>
<feature type="helix" evidence="3">
    <location>
        <begin position="197"/>
        <end position="207"/>
    </location>
</feature>
<feature type="strand" evidence="3">
    <location>
        <begin position="210"/>
        <end position="214"/>
    </location>
</feature>
<feature type="turn" evidence="3">
    <location>
        <begin position="216"/>
        <end position="221"/>
    </location>
</feature>
<feature type="helix" evidence="3">
    <location>
        <begin position="229"/>
        <end position="233"/>
    </location>
</feature>
<feature type="helix" evidence="3">
    <location>
        <begin position="236"/>
        <end position="238"/>
    </location>
</feature>
<feature type="strand" evidence="3">
    <location>
        <begin position="240"/>
        <end position="248"/>
    </location>
</feature>
<feature type="strand" evidence="3">
    <location>
        <begin position="255"/>
        <end position="259"/>
    </location>
</feature>
<feature type="helix" evidence="3">
    <location>
        <begin position="261"/>
        <end position="270"/>
    </location>
</feature>
<feature type="helix" evidence="3">
    <location>
        <begin position="272"/>
        <end position="275"/>
    </location>
</feature>
<feature type="helix" evidence="3">
    <location>
        <begin position="282"/>
        <end position="295"/>
    </location>
</feature>
<feature type="helix" evidence="3">
    <location>
        <begin position="298"/>
        <end position="321"/>
    </location>
</feature>
<feature type="strand" evidence="3">
    <location>
        <begin position="329"/>
        <end position="331"/>
    </location>
</feature>
<feature type="strand" evidence="3">
    <location>
        <begin position="333"/>
        <end position="336"/>
    </location>
</feature>
<feature type="helix" evidence="3">
    <location>
        <begin position="340"/>
        <end position="354"/>
    </location>
</feature>
<feature type="turn" evidence="3">
    <location>
        <begin position="363"/>
        <end position="365"/>
    </location>
</feature>
<feature type="strand" evidence="3">
    <location>
        <begin position="372"/>
        <end position="375"/>
    </location>
</feature>
<feature type="helix" evidence="3">
    <location>
        <begin position="383"/>
        <end position="396"/>
    </location>
</feature>
<protein>
    <recommendedName>
        <fullName>5-aminolevulinate synthase</fullName>
        <ecNumber>2.3.1.37</ecNumber>
    </recommendedName>
    <alternativeName>
        <fullName>5-aminolevulinic acid synthase</fullName>
    </alternativeName>
    <alternativeName>
        <fullName>Delta-ALA synthase</fullName>
    </alternativeName>
    <alternativeName>
        <fullName>Delta-aminolevulinate synthase</fullName>
    </alternativeName>
</protein>
<accession>P18079</accession>
<accession>D5AT85</accession>
<name>HEM1_RHOCB</name>
<evidence type="ECO:0000269" key="1">
    <source>
    </source>
</evidence>
<evidence type="ECO:0000305" key="2"/>
<evidence type="ECO:0007829" key="3">
    <source>
        <dbReference type="PDB" id="2BWN"/>
    </source>
</evidence>
<sequence length="409" mass="44374">MDYNLALDKAIQKLHDEGRYRTFIDIEREKGAFPKAQWNRPDGGKQDITVWCGNDYLGMGQHPVVLAAMHEALEAVGAGSGGTRNISGTTAYHRRLEAEIADLHGKEAALVFSSAYIANDATLSTLRVLFPGLIIYSDSLNHASMIEGIKRNAGPKRIFRHNDVAHLRELIAADDPAAPKLIAFESVYSMDGDFGPIKEICDIADEFGALTYIDEVHAVGMYGPRGAGVAERDGLMHRIDIFNGTLAKAYGVFGGYIAASAKMVDAVRSYAPGFIFSTSLPPAIAAGAQASIAFLKTAEGQKLRDAQQMHAKVLKMRLKALGMPIIDHGSHIVPVVIGDPVHTKAVSDMLLSDYGVYVQPINFPTVPRGTERLRFTPSPVHDLKQIDGLVHAMDLLWARCALNRAEASA</sequence>
<proteinExistence type="evidence at protein level"/>
<keyword id="KW-0002">3D-structure</keyword>
<keyword id="KW-0012">Acyltransferase</keyword>
<keyword id="KW-0350">Heme biosynthesis</keyword>
<keyword id="KW-0663">Pyridoxal phosphate</keyword>
<keyword id="KW-1185">Reference proteome</keyword>
<keyword id="KW-0808">Transferase</keyword>
<comment type="catalytic activity">
    <reaction>
        <text>succinyl-CoA + glycine + H(+) = 5-aminolevulinate + CO2 + CoA</text>
        <dbReference type="Rhea" id="RHEA:12921"/>
        <dbReference type="ChEBI" id="CHEBI:15378"/>
        <dbReference type="ChEBI" id="CHEBI:16526"/>
        <dbReference type="ChEBI" id="CHEBI:57287"/>
        <dbReference type="ChEBI" id="CHEBI:57292"/>
        <dbReference type="ChEBI" id="CHEBI:57305"/>
        <dbReference type="ChEBI" id="CHEBI:356416"/>
        <dbReference type="EC" id="2.3.1.37"/>
    </reaction>
</comment>
<comment type="cofactor">
    <cofactor evidence="1">
        <name>pyridoxal 5'-phosphate</name>
        <dbReference type="ChEBI" id="CHEBI:597326"/>
    </cofactor>
</comment>
<comment type="pathway">
    <text>Porphyrin-containing compound metabolism; protoporphyrin-IX biosynthesis; 5-aminolevulinate from glycine: step 1/1.</text>
</comment>
<comment type="subunit">
    <text evidence="1">Homodimer.</text>
</comment>
<comment type="similarity">
    <text evidence="2">Belongs to the class-II pyridoxal-phosphate-dependent aminotransferase family.</text>
</comment>
<gene>
    <name type="primary">hemA</name>
    <name type="ordered locus">RCAP_rcc01447</name>
</gene>